<feature type="chain" id="PRO_0000148348" description="P antigen family member 4">
    <location>
        <begin position="1"/>
        <end position="102"/>
    </location>
</feature>
<feature type="region of interest" description="Disordered" evidence="1">
    <location>
        <begin position="1"/>
        <end position="102"/>
    </location>
</feature>
<feature type="compositionally biased region" description="Basic residues" evidence="1">
    <location>
        <begin position="1"/>
        <end position="10"/>
    </location>
</feature>
<feature type="compositionally biased region" description="Basic and acidic residues" evidence="1">
    <location>
        <begin position="45"/>
        <end position="85"/>
    </location>
</feature>
<feature type="modified residue" description="Phosphoserine; by CLK2" evidence="8">
    <location>
        <position position="7"/>
    </location>
</feature>
<feature type="modified residue" description="Phosphoserine; by HIPK1 and CLK2" evidence="7 8">
    <location>
        <position position="9"/>
    </location>
</feature>
<feature type="modified residue" description="Phosphothreonine; by HIPK1 and CLK2" evidence="5 7 8 12">
    <location>
        <position position="51"/>
    </location>
</feature>
<feature type="modified residue" description="Phosphothreonine; by CLK2" evidence="8">
    <location>
        <position position="71"/>
    </location>
</feature>
<feature type="modified residue" description="Phosphoserine; by CLK2" evidence="8">
    <location>
        <position position="73"/>
    </location>
</feature>
<feature type="modified residue" description="Phosphoserine; by CLK2" evidence="8">
    <location>
        <position position="79"/>
    </location>
</feature>
<feature type="modified residue" description="Phosphothreonine; by CLK2" evidence="8">
    <location>
        <position position="85"/>
    </location>
</feature>
<feature type="modified residue" description="Phosphothreonine; by CLK2" evidence="8">
    <location>
        <position position="94"/>
    </location>
</feature>
<feature type="mutagenesis site" description="Loss of phosphorylation and its ability to potentiate JUN transcriptional activator activity." evidence="4">
    <original>T</original>
    <variation>A</variation>
    <location>
        <position position="51"/>
    </location>
</feature>
<sequence>MSARVRSRSRGRGDGQEAPDVVAFVAPGESQQEEPPTDNQDIEPGQEREGTPPIEERKVEGDCQEMDLEKTRSERGDGSDVKEKTPPNPKHAKTKEAGDGQP</sequence>
<name>PAGE4_HUMAN</name>
<accession>O60829</accession>
<accession>B2R529</accession>
<accession>D3DX68</accession>
<accession>Q6IBI1</accession>
<comment type="function">
    <text evidence="3 4 6 8 9">Intrinsically disordered protein that potentiates the transcriptional activator activity of JUN (PubMed:24263171, PubMed:28289210). Protects cells from stress-induced apoptosis by inhibiting reactive oxygen species (ROS) production and via regulation of the MAPK signaling pathway (PubMed:21357425, PubMed:25374899, PubMed:30658679).</text>
</comment>
<comment type="subunit">
    <text evidence="4 5 7">Interacts with JUN.</text>
</comment>
<comment type="interaction">
    <interactant intactId="EBI-27085632">
        <id>O60829</id>
    </interactant>
    <interactant intactId="EBI-852823">
        <id>P05412</id>
        <label>JUN</label>
    </interactant>
    <organismsDiffer>false</organismsDiffer>
    <experiments>2</experiments>
</comment>
<comment type="subcellular location">
    <subcellularLocation>
        <location evidence="2 5 6">Cytoplasm</location>
    </subcellularLocation>
    <subcellularLocation>
        <location evidence="5">Nucleus</location>
    </subcellularLocation>
    <subcellularLocation>
        <location evidence="6">Mitochondrion</location>
    </subcellularLocation>
    <text evidence="6">Translocates to mitochondria in response to stress.</text>
</comment>
<comment type="tissue specificity">
    <text evidence="2 4 5 6 10">Expressed at basal lvels in the adult normal prostate gland but is highly up-regulated in the fetal prostate and prostate cancer cells (PubMed:12489849, PubMed:24263171, PubMed:24559171, PubMed:25374899). Preferentially expressed in normal male and female reproductive tissues, testis, fallopian tube, uterus, and placenta, as well as in testicular cancer, uterine cancer, cervical cancer and kidney cancer (PubMed:12489849, PubMed:9724777).</text>
</comment>
<comment type="developmental stage">
    <text evidence="4">Highly expressed in the earlier stages of fetal development, expression decreases dramatically by the time the pre-pubertal prostate buds are developed (36 weeks).</text>
</comment>
<comment type="induction">
    <text evidence="6 9">Up-regulated in response to a variety of stress factors.</text>
</comment>
<comment type="PTM">
    <text evidence="5 7 8">HIPK1-mediated phosphorylation at Thr-51 leads to the compaction of its intrinsically disordered conformation and is critical for its ability to potentiate the transcriptional activator activity of JUN inspite of a reduced interaction with JUN (PubMed:24559171, PubMed:26242913). CLK2-mediated phosphorylation at multiple Ser and Thr residues attenuates its ability to potentiate JUN transcriptional activator activity (PubMed:28289210).</text>
</comment>
<comment type="similarity">
    <text evidence="11">Belongs to the GAGE family.</text>
</comment>
<protein>
    <recommendedName>
        <fullName>P antigen family member 4</fullName>
        <shortName>PAGE-4</shortName>
    </recommendedName>
    <alternativeName>
        <fullName>G antigen family C member 1</fullName>
    </alternativeName>
    <alternativeName>
        <fullName>PAGE-1</fullName>
    </alternativeName>
</protein>
<proteinExistence type="evidence at protein level"/>
<keyword id="KW-0002">3D-structure</keyword>
<keyword id="KW-0010">Activator</keyword>
<keyword id="KW-0963">Cytoplasm</keyword>
<keyword id="KW-0238">DNA-binding</keyword>
<keyword id="KW-0496">Mitochondrion</keyword>
<keyword id="KW-0539">Nucleus</keyword>
<keyword id="KW-0597">Phosphoprotein</keyword>
<keyword id="KW-1267">Proteomics identification</keyword>
<keyword id="KW-1185">Reference proteome</keyword>
<keyword id="KW-0804">Transcription</keyword>
<keyword id="KW-0805">Transcription regulation</keyword>
<organism>
    <name type="scientific">Homo sapiens</name>
    <name type="common">Human</name>
    <dbReference type="NCBI Taxonomy" id="9606"/>
    <lineage>
        <taxon>Eukaryota</taxon>
        <taxon>Metazoa</taxon>
        <taxon>Chordata</taxon>
        <taxon>Craniata</taxon>
        <taxon>Vertebrata</taxon>
        <taxon>Euteleostomi</taxon>
        <taxon>Mammalia</taxon>
        <taxon>Eutheria</taxon>
        <taxon>Euarchontoglires</taxon>
        <taxon>Primates</taxon>
        <taxon>Haplorrhini</taxon>
        <taxon>Catarrhini</taxon>
        <taxon>Hominidae</taxon>
        <taxon>Homo</taxon>
    </lineage>
</organism>
<reference key="1">
    <citation type="journal article" date="1998" name="Proc. Natl. Acad. Sci. U.S.A.">
        <title>PAGE-1, an X chromosome-linked GAGE-like gene that is expressed in normal and neoplastic prostate, testis, and uterus.</title>
        <authorList>
            <person name="Brinkmann U."/>
            <person name="Vasmatzis G."/>
            <person name="Lee B."/>
            <person name="Yerushalmi N."/>
            <person name="Essand M."/>
            <person name="Pastan I."/>
        </authorList>
    </citation>
    <scope>NUCLEOTIDE SEQUENCE [MRNA]</scope>
    <scope>TISSUE SPECIFICITY</scope>
</reference>
<reference key="2">
    <citation type="submission" date="1998-04" db="EMBL/GenBank/DDBJ databases">
        <title>Transcription map in Xp11.23.</title>
        <authorList>
            <person name="Strom T.M."/>
            <person name="Nyakatura G."/>
            <person name="Hellebrand H."/>
            <person name="Drescher B."/>
            <person name="Rosenthal A."/>
            <person name="Meindl A."/>
        </authorList>
    </citation>
    <scope>NUCLEOTIDE SEQUENCE [LARGE SCALE MRNA]</scope>
    <source>
        <tissue>Placenta</tissue>
    </source>
</reference>
<reference key="3">
    <citation type="submission" date="2004-06" db="EMBL/GenBank/DDBJ databases">
        <title>Cloning of human full open reading frames in Gateway(TM) system entry vector (pDONR201).</title>
        <authorList>
            <person name="Ebert L."/>
            <person name="Schick M."/>
            <person name="Neubert P."/>
            <person name="Schatten R."/>
            <person name="Henze S."/>
            <person name="Korn B."/>
        </authorList>
    </citation>
    <scope>NUCLEOTIDE SEQUENCE [LARGE SCALE MRNA]</scope>
</reference>
<reference key="4">
    <citation type="submission" date="2004-06" db="EMBL/GenBank/DDBJ databases">
        <title>Cloning of human full open reading frames in Gateway(TM) system entry vector (pDONR201).</title>
        <authorList>
            <person name="Halleck A."/>
            <person name="Ebert L."/>
            <person name="Mkoundinya M."/>
            <person name="Schick M."/>
            <person name="Eisenstein S."/>
            <person name="Neubert P."/>
            <person name="Kstrang K."/>
            <person name="Schatten R."/>
            <person name="Shen B."/>
            <person name="Henze S."/>
            <person name="Mar W."/>
            <person name="Korn B."/>
            <person name="Zuo D."/>
            <person name="Hu Y."/>
            <person name="LaBaer J."/>
        </authorList>
    </citation>
    <scope>NUCLEOTIDE SEQUENCE [LARGE SCALE MRNA]</scope>
</reference>
<reference key="5">
    <citation type="journal article" date="2004" name="Nat. Genet.">
        <title>Complete sequencing and characterization of 21,243 full-length human cDNAs.</title>
        <authorList>
            <person name="Ota T."/>
            <person name="Suzuki Y."/>
            <person name="Nishikawa T."/>
            <person name="Otsuki T."/>
            <person name="Sugiyama T."/>
            <person name="Irie R."/>
            <person name="Wakamatsu A."/>
            <person name="Hayashi K."/>
            <person name="Sato H."/>
            <person name="Nagai K."/>
            <person name="Kimura K."/>
            <person name="Makita H."/>
            <person name="Sekine M."/>
            <person name="Obayashi M."/>
            <person name="Nishi T."/>
            <person name="Shibahara T."/>
            <person name="Tanaka T."/>
            <person name="Ishii S."/>
            <person name="Yamamoto J."/>
            <person name="Saito K."/>
            <person name="Kawai Y."/>
            <person name="Isono Y."/>
            <person name="Nakamura Y."/>
            <person name="Nagahari K."/>
            <person name="Murakami K."/>
            <person name="Yasuda T."/>
            <person name="Iwayanagi T."/>
            <person name="Wagatsuma M."/>
            <person name="Shiratori A."/>
            <person name="Sudo H."/>
            <person name="Hosoiri T."/>
            <person name="Kaku Y."/>
            <person name="Kodaira H."/>
            <person name="Kondo H."/>
            <person name="Sugawara M."/>
            <person name="Takahashi M."/>
            <person name="Kanda K."/>
            <person name="Yokoi T."/>
            <person name="Furuya T."/>
            <person name="Kikkawa E."/>
            <person name="Omura Y."/>
            <person name="Abe K."/>
            <person name="Kamihara K."/>
            <person name="Katsuta N."/>
            <person name="Sato K."/>
            <person name="Tanikawa M."/>
            <person name="Yamazaki M."/>
            <person name="Ninomiya K."/>
            <person name="Ishibashi T."/>
            <person name="Yamashita H."/>
            <person name="Murakawa K."/>
            <person name="Fujimori K."/>
            <person name="Tanai H."/>
            <person name="Kimata M."/>
            <person name="Watanabe M."/>
            <person name="Hiraoka S."/>
            <person name="Chiba Y."/>
            <person name="Ishida S."/>
            <person name="Ono Y."/>
            <person name="Takiguchi S."/>
            <person name="Watanabe S."/>
            <person name="Yosida M."/>
            <person name="Hotuta T."/>
            <person name="Kusano J."/>
            <person name="Kanehori K."/>
            <person name="Takahashi-Fujii A."/>
            <person name="Hara H."/>
            <person name="Tanase T.-O."/>
            <person name="Nomura Y."/>
            <person name="Togiya S."/>
            <person name="Komai F."/>
            <person name="Hara R."/>
            <person name="Takeuchi K."/>
            <person name="Arita M."/>
            <person name="Imose N."/>
            <person name="Musashino K."/>
            <person name="Yuuki H."/>
            <person name="Oshima A."/>
            <person name="Sasaki N."/>
            <person name="Aotsuka S."/>
            <person name="Yoshikawa Y."/>
            <person name="Matsunawa H."/>
            <person name="Ichihara T."/>
            <person name="Shiohata N."/>
            <person name="Sano S."/>
            <person name="Moriya S."/>
            <person name="Momiyama H."/>
            <person name="Satoh N."/>
            <person name="Takami S."/>
            <person name="Terashima Y."/>
            <person name="Suzuki O."/>
            <person name="Nakagawa S."/>
            <person name="Senoh A."/>
            <person name="Mizoguchi H."/>
            <person name="Goto Y."/>
            <person name="Shimizu F."/>
            <person name="Wakebe H."/>
            <person name="Hishigaki H."/>
            <person name="Watanabe T."/>
            <person name="Sugiyama A."/>
            <person name="Takemoto M."/>
            <person name="Kawakami B."/>
            <person name="Yamazaki M."/>
            <person name="Watanabe K."/>
            <person name="Kumagai A."/>
            <person name="Itakura S."/>
            <person name="Fukuzumi Y."/>
            <person name="Fujimori Y."/>
            <person name="Komiyama M."/>
            <person name="Tashiro H."/>
            <person name="Tanigami A."/>
            <person name="Fujiwara T."/>
            <person name="Ono T."/>
            <person name="Yamada K."/>
            <person name="Fujii Y."/>
            <person name="Ozaki K."/>
            <person name="Hirao M."/>
            <person name="Ohmori Y."/>
            <person name="Kawabata A."/>
            <person name="Hikiji T."/>
            <person name="Kobatake N."/>
            <person name="Inagaki H."/>
            <person name="Ikema Y."/>
            <person name="Okamoto S."/>
            <person name="Okitani R."/>
            <person name="Kawakami T."/>
            <person name="Noguchi S."/>
            <person name="Itoh T."/>
            <person name="Shigeta K."/>
            <person name="Senba T."/>
            <person name="Matsumura K."/>
            <person name="Nakajima Y."/>
            <person name="Mizuno T."/>
            <person name="Morinaga M."/>
            <person name="Sasaki M."/>
            <person name="Togashi T."/>
            <person name="Oyama M."/>
            <person name="Hata H."/>
            <person name="Watanabe M."/>
            <person name="Komatsu T."/>
            <person name="Mizushima-Sugano J."/>
            <person name="Satoh T."/>
            <person name="Shirai Y."/>
            <person name="Takahashi Y."/>
            <person name="Nakagawa K."/>
            <person name="Okumura K."/>
            <person name="Nagase T."/>
            <person name="Nomura N."/>
            <person name="Kikuchi H."/>
            <person name="Masuho Y."/>
            <person name="Yamashita R."/>
            <person name="Nakai K."/>
            <person name="Yada T."/>
            <person name="Nakamura Y."/>
            <person name="Ohara O."/>
            <person name="Isogai T."/>
            <person name="Sugano S."/>
        </authorList>
    </citation>
    <scope>NUCLEOTIDE SEQUENCE [LARGE SCALE MRNA]</scope>
    <source>
        <tissue>Placenta</tissue>
    </source>
</reference>
<reference key="6">
    <citation type="journal article" date="2005" name="Nature">
        <title>The DNA sequence of the human X chromosome.</title>
        <authorList>
            <person name="Ross M.T."/>
            <person name="Grafham D.V."/>
            <person name="Coffey A.J."/>
            <person name="Scherer S."/>
            <person name="McLay K."/>
            <person name="Muzny D."/>
            <person name="Platzer M."/>
            <person name="Howell G.R."/>
            <person name="Burrows C."/>
            <person name="Bird C.P."/>
            <person name="Frankish A."/>
            <person name="Lovell F.L."/>
            <person name="Howe K.L."/>
            <person name="Ashurst J.L."/>
            <person name="Fulton R.S."/>
            <person name="Sudbrak R."/>
            <person name="Wen G."/>
            <person name="Jones M.C."/>
            <person name="Hurles M.E."/>
            <person name="Andrews T.D."/>
            <person name="Scott C.E."/>
            <person name="Searle S."/>
            <person name="Ramser J."/>
            <person name="Whittaker A."/>
            <person name="Deadman R."/>
            <person name="Carter N.P."/>
            <person name="Hunt S.E."/>
            <person name="Chen R."/>
            <person name="Cree A."/>
            <person name="Gunaratne P."/>
            <person name="Havlak P."/>
            <person name="Hodgson A."/>
            <person name="Metzker M.L."/>
            <person name="Richards S."/>
            <person name="Scott G."/>
            <person name="Steffen D."/>
            <person name="Sodergren E."/>
            <person name="Wheeler D.A."/>
            <person name="Worley K.C."/>
            <person name="Ainscough R."/>
            <person name="Ambrose K.D."/>
            <person name="Ansari-Lari M.A."/>
            <person name="Aradhya S."/>
            <person name="Ashwell R.I."/>
            <person name="Babbage A.K."/>
            <person name="Bagguley C.L."/>
            <person name="Ballabio A."/>
            <person name="Banerjee R."/>
            <person name="Barker G.E."/>
            <person name="Barlow K.F."/>
            <person name="Barrett I.P."/>
            <person name="Bates K.N."/>
            <person name="Beare D.M."/>
            <person name="Beasley H."/>
            <person name="Beasley O."/>
            <person name="Beck A."/>
            <person name="Bethel G."/>
            <person name="Blechschmidt K."/>
            <person name="Brady N."/>
            <person name="Bray-Allen S."/>
            <person name="Bridgeman A.M."/>
            <person name="Brown A.J."/>
            <person name="Brown M.J."/>
            <person name="Bonnin D."/>
            <person name="Bruford E.A."/>
            <person name="Buhay C."/>
            <person name="Burch P."/>
            <person name="Burford D."/>
            <person name="Burgess J."/>
            <person name="Burrill W."/>
            <person name="Burton J."/>
            <person name="Bye J.M."/>
            <person name="Carder C."/>
            <person name="Carrel L."/>
            <person name="Chako J."/>
            <person name="Chapman J.C."/>
            <person name="Chavez D."/>
            <person name="Chen E."/>
            <person name="Chen G."/>
            <person name="Chen Y."/>
            <person name="Chen Z."/>
            <person name="Chinault C."/>
            <person name="Ciccodicola A."/>
            <person name="Clark S.Y."/>
            <person name="Clarke G."/>
            <person name="Clee C.M."/>
            <person name="Clegg S."/>
            <person name="Clerc-Blankenburg K."/>
            <person name="Clifford K."/>
            <person name="Cobley V."/>
            <person name="Cole C.G."/>
            <person name="Conquer J.S."/>
            <person name="Corby N."/>
            <person name="Connor R.E."/>
            <person name="David R."/>
            <person name="Davies J."/>
            <person name="Davis C."/>
            <person name="Davis J."/>
            <person name="Delgado O."/>
            <person name="Deshazo D."/>
            <person name="Dhami P."/>
            <person name="Ding Y."/>
            <person name="Dinh H."/>
            <person name="Dodsworth S."/>
            <person name="Draper H."/>
            <person name="Dugan-Rocha S."/>
            <person name="Dunham A."/>
            <person name="Dunn M."/>
            <person name="Durbin K.J."/>
            <person name="Dutta I."/>
            <person name="Eades T."/>
            <person name="Ellwood M."/>
            <person name="Emery-Cohen A."/>
            <person name="Errington H."/>
            <person name="Evans K.L."/>
            <person name="Faulkner L."/>
            <person name="Francis F."/>
            <person name="Frankland J."/>
            <person name="Fraser A.E."/>
            <person name="Galgoczy P."/>
            <person name="Gilbert J."/>
            <person name="Gill R."/>
            <person name="Gloeckner G."/>
            <person name="Gregory S.G."/>
            <person name="Gribble S."/>
            <person name="Griffiths C."/>
            <person name="Grocock R."/>
            <person name="Gu Y."/>
            <person name="Gwilliam R."/>
            <person name="Hamilton C."/>
            <person name="Hart E.A."/>
            <person name="Hawes A."/>
            <person name="Heath P.D."/>
            <person name="Heitmann K."/>
            <person name="Hennig S."/>
            <person name="Hernandez J."/>
            <person name="Hinzmann B."/>
            <person name="Ho S."/>
            <person name="Hoffs M."/>
            <person name="Howden P.J."/>
            <person name="Huckle E.J."/>
            <person name="Hume J."/>
            <person name="Hunt P.J."/>
            <person name="Hunt A.R."/>
            <person name="Isherwood J."/>
            <person name="Jacob L."/>
            <person name="Johnson D."/>
            <person name="Jones S."/>
            <person name="de Jong P.J."/>
            <person name="Joseph S.S."/>
            <person name="Keenan S."/>
            <person name="Kelly S."/>
            <person name="Kershaw J.K."/>
            <person name="Khan Z."/>
            <person name="Kioschis P."/>
            <person name="Klages S."/>
            <person name="Knights A.J."/>
            <person name="Kosiura A."/>
            <person name="Kovar-Smith C."/>
            <person name="Laird G.K."/>
            <person name="Langford C."/>
            <person name="Lawlor S."/>
            <person name="Leversha M."/>
            <person name="Lewis L."/>
            <person name="Liu W."/>
            <person name="Lloyd C."/>
            <person name="Lloyd D.M."/>
            <person name="Loulseged H."/>
            <person name="Loveland J.E."/>
            <person name="Lovell J.D."/>
            <person name="Lozado R."/>
            <person name="Lu J."/>
            <person name="Lyne R."/>
            <person name="Ma J."/>
            <person name="Maheshwari M."/>
            <person name="Matthews L.H."/>
            <person name="McDowall J."/>
            <person name="McLaren S."/>
            <person name="McMurray A."/>
            <person name="Meidl P."/>
            <person name="Meitinger T."/>
            <person name="Milne S."/>
            <person name="Miner G."/>
            <person name="Mistry S.L."/>
            <person name="Morgan M."/>
            <person name="Morris S."/>
            <person name="Mueller I."/>
            <person name="Mullikin J.C."/>
            <person name="Nguyen N."/>
            <person name="Nordsiek G."/>
            <person name="Nyakatura G."/>
            <person name="O'dell C.N."/>
            <person name="Okwuonu G."/>
            <person name="Palmer S."/>
            <person name="Pandian R."/>
            <person name="Parker D."/>
            <person name="Parrish J."/>
            <person name="Pasternak S."/>
            <person name="Patel D."/>
            <person name="Pearce A.V."/>
            <person name="Pearson D.M."/>
            <person name="Pelan S.E."/>
            <person name="Perez L."/>
            <person name="Porter K.M."/>
            <person name="Ramsey Y."/>
            <person name="Reichwald K."/>
            <person name="Rhodes S."/>
            <person name="Ridler K.A."/>
            <person name="Schlessinger D."/>
            <person name="Schueler M.G."/>
            <person name="Sehra H.K."/>
            <person name="Shaw-Smith C."/>
            <person name="Shen H."/>
            <person name="Sheridan E.M."/>
            <person name="Shownkeen R."/>
            <person name="Skuce C.D."/>
            <person name="Smith M.L."/>
            <person name="Sotheran E.C."/>
            <person name="Steingruber H.E."/>
            <person name="Steward C.A."/>
            <person name="Storey R."/>
            <person name="Swann R.M."/>
            <person name="Swarbreck D."/>
            <person name="Tabor P.E."/>
            <person name="Taudien S."/>
            <person name="Taylor T."/>
            <person name="Teague B."/>
            <person name="Thomas K."/>
            <person name="Thorpe A."/>
            <person name="Timms K."/>
            <person name="Tracey A."/>
            <person name="Trevanion S."/>
            <person name="Tromans A.C."/>
            <person name="d'Urso M."/>
            <person name="Verduzco D."/>
            <person name="Villasana D."/>
            <person name="Waldron L."/>
            <person name="Wall M."/>
            <person name="Wang Q."/>
            <person name="Warren J."/>
            <person name="Warry G.L."/>
            <person name="Wei X."/>
            <person name="West A."/>
            <person name="Whitehead S.L."/>
            <person name="Whiteley M.N."/>
            <person name="Wilkinson J.E."/>
            <person name="Willey D.L."/>
            <person name="Williams G."/>
            <person name="Williams L."/>
            <person name="Williamson A."/>
            <person name="Williamson H."/>
            <person name="Wilming L."/>
            <person name="Woodmansey R.L."/>
            <person name="Wray P.W."/>
            <person name="Yen J."/>
            <person name="Zhang J."/>
            <person name="Zhou J."/>
            <person name="Zoghbi H."/>
            <person name="Zorilla S."/>
            <person name="Buck D."/>
            <person name="Reinhardt R."/>
            <person name="Poustka A."/>
            <person name="Rosenthal A."/>
            <person name="Lehrach H."/>
            <person name="Meindl A."/>
            <person name="Minx P.J."/>
            <person name="Hillier L.W."/>
            <person name="Willard H.F."/>
            <person name="Wilson R.K."/>
            <person name="Waterston R.H."/>
            <person name="Rice C.M."/>
            <person name="Vaudin M."/>
            <person name="Coulson A."/>
            <person name="Nelson D.L."/>
            <person name="Weinstock G."/>
            <person name="Sulston J.E."/>
            <person name="Durbin R.M."/>
            <person name="Hubbard T."/>
            <person name="Gibbs R.A."/>
            <person name="Beck S."/>
            <person name="Rogers J."/>
            <person name="Bentley D.R."/>
        </authorList>
    </citation>
    <scope>NUCLEOTIDE SEQUENCE [LARGE SCALE GENOMIC DNA]</scope>
</reference>
<reference key="7">
    <citation type="submission" date="2005-09" db="EMBL/GenBank/DDBJ databases">
        <authorList>
            <person name="Mural R.J."/>
            <person name="Istrail S."/>
            <person name="Sutton G.G."/>
            <person name="Florea L."/>
            <person name="Halpern A.L."/>
            <person name="Mobarry C.M."/>
            <person name="Lippert R."/>
            <person name="Walenz B."/>
            <person name="Shatkay H."/>
            <person name="Dew I."/>
            <person name="Miller J.R."/>
            <person name="Flanigan M.J."/>
            <person name="Edwards N.J."/>
            <person name="Bolanos R."/>
            <person name="Fasulo D."/>
            <person name="Halldorsson B.V."/>
            <person name="Hannenhalli S."/>
            <person name="Turner R."/>
            <person name="Yooseph S."/>
            <person name="Lu F."/>
            <person name="Nusskern D.R."/>
            <person name="Shue B.C."/>
            <person name="Zheng X.H."/>
            <person name="Zhong F."/>
            <person name="Delcher A.L."/>
            <person name="Huson D.H."/>
            <person name="Kravitz S.A."/>
            <person name="Mouchard L."/>
            <person name="Reinert K."/>
            <person name="Remington K.A."/>
            <person name="Clark A.G."/>
            <person name="Waterman M.S."/>
            <person name="Eichler E.E."/>
            <person name="Adams M.D."/>
            <person name="Hunkapiller M.W."/>
            <person name="Myers E.W."/>
            <person name="Venter J.C."/>
        </authorList>
    </citation>
    <scope>NUCLEOTIDE SEQUENCE [LARGE SCALE GENOMIC DNA]</scope>
</reference>
<reference key="8">
    <citation type="journal article" date="2004" name="Genome Res.">
        <title>The status, quality, and expansion of the NIH full-length cDNA project: the Mammalian Gene Collection (MGC).</title>
        <authorList>
            <consortium name="The MGC Project Team"/>
        </authorList>
    </citation>
    <scope>NUCLEOTIDE SEQUENCE [LARGE SCALE MRNA]</scope>
    <source>
        <tissue>Placenta</tissue>
    </source>
</reference>
<reference key="9">
    <citation type="journal article" date="2002" name="Mol. Cancer Ther.">
        <title>PAGE4 is a cytoplasmic protein that is expressed in normal prostate and in prostate cancers.</title>
        <authorList>
            <person name="Iavarone C."/>
            <person name="Wolfgang C."/>
            <person name="Kumar V."/>
            <person name="Duray P."/>
            <person name="Willingham M."/>
            <person name="Pastan I."/>
            <person name="Bera T.K."/>
        </authorList>
    </citation>
    <scope>SUBCELLULAR LOCATION</scope>
    <scope>TISSUE SPECIFICITY</scope>
</reference>
<reference key="10">
    <citation type="journal article" date="2011" name="J. Biol. Chem.">
        <title>The cancer/testis antigen prostate-associated gene 4 (PAGE4) is a highly intrinsically disordered protein.</title>
        <authorList>
            <person name="Zeng Y."/>
            <person name="He Y."/>
            <person name="Yang F."/>
            <person name="Mooney S.M."/>
            <person name="Getzenberg R.H."/>
            <person name="Orban J."/>
            <person name="Kulkarni P."/>
        </authorList>
    </citation>
    <scope>FUNCTION</scope>
    <scope>DNA-BINDING</scope>
</reference>
<reference key="11">
    <citation type="journal article" date="2013" name="Am. J. Clin. Exp. Urol.">
        <title>Prostate-associated gene 4 (PAGE4) protects cells against stress by elevating p21 and suppressing reactive oxygen species production.</title>
        <authorList>
            <person name="Zeng Y."/>
            <person name="Gao D."/>
            <person name="Kim J.J."/>
            <person name="Shiraishi T."/>
            <person name="Terada N."/>
            <person name="Kakehi Y."/>
            <person name="Kong C."/>
            <person name="Getzenberg R.H."/>
            <person name="Kulkarni P."/>
        </authorList>
    </citation>
    <scope>FUNCTION</scope>
    <scope>INDUCTION</scope>
    <scope>TISSUE SPECIFICITY</scope>
    <scope>SUBCELLULAR LOCATION</scope>
</reference>
<reference key="12">
    <citation type="journal article" date="2013" name="J. Proteome Res.">
        <title>Toward a comprehensive characterization of a human cancer cell phosphoproteome.</title>
        <authorList>
            <person name="Zhou H."/>
            <person name="Di Palma S."/>
            <person name="Preisinger C."/>
            <person name="Peng M."/>
            <person name="Polat A.N."/>
            <person name="Heck A.J."/>
            <person name="Mohammed S."/>
        </authorList>
    </citation>
    <scope>PHOSPHORYLATION [LARGE SCALE ANALYSIS] AT THR-51</scope>
    <scope>IDENTIFICATION BY MASS SPECTROMETRY [LARGE SCALE ANALYSIS]</scope>
    <source>
        <tissue>Erythroleukemia</tissue>
    </source>
</reference>
<reference key="13">
    <citation type="journal article" date="2014" name="Biochemistry">
        <title>Cancer/testis antigen PAGE4, a regulator of c-Jun transactivation, is phosphorylated by homeodomain-interacting protein kinase 1, a component of the stress-response pathway.</title>
        <authorList>
            <person name="Mooney S.M."/>
            <person name="Qiu R."/>
            <person name="Kim J.J."/>
            <person name="Sacho E.J."/>
            <person name="Rajagopalan K."/>
            <person name="Johng D."/>
            <person name="Shiraishi T."/>
            <person name="Kulkarni P."/>
            <person name="Weninger K.R."/>
        </authorList>
    </citation>
    <scope>FUNCTION</scope>
    <scope>PHOSPHORYLATION AT THR-51</scope>
    <scope>MUTAGENESIS OF THR-51</scope>
    <scope>INTERACTION WITH JUN</scope>
    <scope>SUBCELLULAR LOCATION</scope>
    <scope>TISSUE SPECIFICITY</scope>
</reference>
<reference key="14">
    <citation type="journal article" date="2014" name="Biochim. Biophys. Acta">
        <title>The Stress-response protein prostate-associated gene 4, interacts with c-Jun and potentiates its transactivation.</title>
        <authorList>
            <person name="Rajagopalan K."/>
            <person name="Qiu R."/>
            <person name="Mooney S.M."/>
            <person name="Rao S."/>
            <person name="Shiraishi T."/>
            <person name="Sacho E."/>
            <person name="Huang H."/>
            <person name="Shapiro E."/>
            <person name="Weninger K.R."/>
            <person name="Kulkarni P."/>
        </authorList>
    </citation>
    <scope>FUNCTION</scope>
    <scope>TISSUE SPECIFICITY</scope>
    <scope>DEVELOPMENTAL STAGE</scope>
    <scope>INTERACTION WITH JUN</scope>
</reference>
<reference key="15">
    <citation type="journal article" date="2015" name="J. Biol. Chem.">
        <title>Phosphorylation-induced conformational ensemble switching in an intrinsically disordered cancer/testis antigen.</title>
        <authorList>
            <person name="He Y."/>
            <person name="Chen Y."/>
            <person name="Mooney S.M."/>
            <person name="Rajagopalan K."/>
            <person name="Bhargava A."/>
            <person name="Sacho E."/>
            <person name="Weninger K."/>
            <person name="Bryan P.N."/>
            <person name="Kulkarni P."/>
            <person name="Orban J."/>
        </authorList>
    </citation>
    <scope>PHOSPHORYLATION AT SER-9 AND THR-51</scope>
    <scope>INTERACTION WITH JUN</scope>
</reference>
<reference key="16">
    <citation type="journal article" date="2016" name="Asian J. Androl.">
        <title>Prostate-associated gene 4 (PAGE4), an intrinsically disordered cancer/testis antigen, is a novel therapeutic target for prostate cancer.</title>
        <authorList>
            <person name="Kulkarni P."/>
            <person name="Dunker A.K."/>
            <person name="Weninger K."/>
            <person name="Orban J."/>
        </authorList>
    </citation>
    <scope>REVIEW</scope>
</reference>
<reference key="17">
    <citation type="journal article" date="2017" name="Proc. Natl. Acad. Sci. U.S.A.">
        <title>Phosphorylation-induced conformational dynamics in an intrinsically disordered protein and potential role in phenotypic heterogeneity.</title>
        <authorList>
            <person name="Kulkarni P."/>
            <person name="Jolly M.K."/>
            <person name="Jia D."/>
            <person name="Mooney S.M."/>
            <person name="Bhargava A."/>
            <person name="Kagohara L.T."/>
            <person name="Chen Y."/>
            <person name="Hao P."/>
            <person name="He Y."/>
            <person name="Veltri R.W."/>
            <person name="Grishaev A."/>
            <person name="Weninger K."/>
            <person name="Levine H."/>
            <person name="Orban J."/>
        </authorList>
    </citation>
    <scope>FUNCTION</scope>
    <scope>PHOSPHORYLATION AT SER-7; SER-9; THR-51; THR-71; SER-73; SER-79; THR-85 AND THR-94</scope>
</reference>
<reference key="18">
    <citation type="journal article" date="2019" name="J. Exp. Clin. Cancer Res.">
        <title>PAGE4 promotes prostate cancer cells survive under oxidative stress through modulating MAPK/JNK/ERK pathway.</title>
        <authorList>
            <person name="Lv C."/>
            <person name="Fu S."/>
            <person name="Dong Q."/>
            <person name="Yu Z."/>
            <person name="Zhang G."/>
            <person name="Kong C."/>
            <person name="Fu C."/>
            <person name="Zeng Y."/>
        </authorList>
    </citation>
    <scope>FUNCTION</scope>
    <scope>INDUCTION</scope>
</reference>
<gene>
    <name type="primary">PAGE4</name>
    <name type="synonym">GAGEC1</name>
    <name type="ORF">JM27</name>
</gene>
<evidence type="ECO:0000256" key="1">
    <source>
        <dbReference type="SAM" id="MobiDB-lite"/>
    </source>
</evidence>
<evidence type="ECO:0000269" key="2">
    <source>
    </source>
</evidence>
<evidence type="ECO:0000269" key="3">
    <source>
    </source>
</evidence>
<evidence type="ECO:0000269" key="4">
    <source>
    </source>
</evidence>
<evidence type="ECO:0000269" key="5">
    <source>
    </source>
</evidence>
<evidence type="ECO:0000269" key="6">
    <source>
    </source>
</evidence>
<evidence type="ECO:0000269" key="7">
    <source>
    </source>
</evidence>
<evidence type="ECO:0000269" key="8">
    <source>
    </source>
</evidence>
<evidence type="ECO:0000269" key="9">
    <source>
    </source>
</evidence>
<evidence type="ECO:0000269" key="10">
    <source>
    </source>
</evidence>
<evidence type="ECO:0000305" key="11"/>
<evidence type="ECO:0007744" key="12">
    <source>
    </source>
</evidence>
<dbReference type="EMBL" id="AF275258">
    <property type="protein sequence ID" value="AAF88037.1"/>
    <property type="molecule type" value="mRNA"/>
</dbReference>
<dbReference type="EMBL" id="AJ005894">
    <property type="protein sequence ID" value="CAA06751.1"/>
    <property type="molecule type" value="mRNA"/>
</dbReference>
<dbReference type="EMBL" id="CR456823">
    <property type="protein sequence ID" value="CAG33104.1"/>
    <property type="molecule type" value="mRNA"/>
</dbReference>
<dbReference type="EMBL" id="CR542183">
    <property type="protein sequence ID" value="CAG46980.1"/>
    <property type="molecule type" value="mRNA"/>
</dbReference>
<dbReference type="EMBL" id="AK312039">
    <property type="protein sequence ID" value="BAG34976.1"/>
    <property type="molecule type" value="mRNA"/>
</dbReference>
<dbReference type="EMBL" id="AF238380">
    <property type="status" value="NOT_ANNOTATED_CDS"/>
    <property type="molecule type" value="Genomic_DNA"/>
</dbReference>
<dbReference type="EMBL" id="CH471180">
    <property type="protein sequence ID" value="EAW89932.1"/>
    <property type="molecule type" value="Genomic_DNA"/>
</dbReference>
<dbReference type="EMBL" id="CH471180">
    <property type="protein sequence ID" value="EAW89933.1"/>
    <property type="molecule type" value="Genomic_DNA"/>
</dbReference>
<dbReference type="EMBL" id="BC010897">
    <property type="protein sequence ID" value="AAH10897.1"/>
    <property type="molecule type" value="mRNA"/>
</dbReference>
<dbReference type="CCDS" id="CCDS35274.1"/>
<dbReference type="RefSeq" id="NP_001305806.1">
    <property type="nucleotide sequence ID" value="NM_001318877.1"/>
</dbReference>
<dbReference type="RefSeq" id="NP_008934.1">
    <property type="nucleotide sequence ID" value="NM_007003.4"/>
</dbReference>
<dbReference type="RefSeq" id="XP_047298634.1">
    <property type="nucleotide sequence ID" value="XM_047442678.1"/>
</dbReference>
<dbReference type="PDB" id="6URQ">
    <property type="method" value="X-ray"/>
    <property type="resolution" value="2.05 A"/>
    <property type="chains" value="C/D=1-102"/>
</dbReference>
<dbReference type="PDBsum" id="6URQ"/>
<dbReference type="SMR" id="O60829"/>
<dbReference type="BioGRID" id="114884">
    <property type="interactions" value="258"/>
</dbReference>
<dbReference type="FunCoup" id="O60829">
    <property type="interactions" value="12"/>
</dbReference>
<dbReference type="IntAct" id="O60829">
    <property type="interactions" value="3"/>
</dbReference>
<dbReference type="STRING" id="9606.ENSP00000218068"/>
<dbReference type="GlyGen" id="O60829">
    <property type="glycosylation" value="1 site"/>
</dbReference>
<dbReference type="iPTMnet" id="O60829"/>
<dbReference type="PhosphoSitePlus" id="O60829"/>
<dbReference type="BioMuta" id="PAGE4"/>
<dbReference type="jPOST" id="O60829"/>
<dbReference type="MassIVE" id="O60829"/>
<dbReference type="PaxDb" id="9606-ENSP00000218068"/>
<dbReference type="PeptideAtlas" id="O60829"/>
<dbReference type="ProteomicsDB" id="49621"/>
<dbReference type="Antibodypedia" id="12225">
    <property type="antibodies" value="92 antibodies from 20 providers"/>
</dbReference>
<dbReference type="DNASU" id="9506"/>
<dbReference type="Ensembl" id="ENST00000218068.7">
    <property type="protein sequence ID" value="ENSP00000218068.6"/>
    <property type="gene ID" value="ENSG00000101951.18"/>
</dbReference>
<dbReference type="Ensembl" id="ENST00000376141.5">
    <property type="protein sequence ID" value="ENSP00000365311.1"/>
    <property type="gene ID" value="ENSG00000101951.18"/>
</dbReference>
<dbReference type="Ensembl" id="ENST00000715210.1">
    <property type="protein sequence ID" value="ENSP00000520416.1"/>
    <property type="gene ID" value="ENSG00000101951.18"/>
</dbReference>
<dbReference type="Ensembl" id="ENST00000715211.1">
    <property type="protein sequence ID" value="ENSP00000520417.1"/>
    <property type="gene ID" value="ENSG00000101951.18"/>
</dbReference>
<dbReference type="GeneID" id="9506"/>
<dbReference type="KEGG" id="hsa:9506"/>
<dbReference type="MANE-Select" id="ENST00000218068.7">
    <property type="protein sequence ID" value="ENSP00000218068.6"/>
    <property type="RefSeq nucleotide sequence ID" value="NM_007003.4"/>
    <property type="RefSeq protein sequence ID" value="NP_008934.1"/>
</dbReference>
<dbReference type="UCSC" id="uc004don.3">
    <property type="organism name" value="human"/>
</dbReference>
<dbReference type="AGR" id="HGNC:4108"/>
<dbReference type="CTD" id="9506"/>
<dbReference type="DisGeNET" id="9506"/>
<dbReference type="GeneCards" id="PAGE4"/>
<dbReference type="HGNC" id="HGNC:4108">
    <property type="gene designation" value="PAGE4"/>
</dbReference>
<dbReference type="HPA" id="ENSG00000101951">
    <property type="expression patterns" value="Group enriched (epididymis, placenta)"/>
</dbReference>
<dbReference type="MIM" id="300287">
    <property type="type" value="gene"/>
</dbReference>
<dbReference type="neXtProt" id="NX_O60829"/>
<dbReference type="OpenTargets" id="ENSG00000101951"/>
<dbReference type="PharmGKB" id="PA28523"/>
<dbReference type="VEuPathDB" id="HostDB:ENSG00000101951"/>
<dbReference type="eggNOG" id="ENOG502TF3A">
    <property type="taxonomic scope" value="Eukaryota"/>
</dbReference>
<dbReference type="GeneTree" id="ENSGT00940000153097"/>
<dbReference type="HOGENOM" id="CLU_150116_1_0_1"/>
<dbReference type="InParanoid" id="O60829"/>
<dbReference type="OMA" id="FMAPRES"/>
<dbReference type="OrthoDB" id="9538326at2759"/>
<dbReference type="PAN-GO" id="O60829">
    <property type="GO annotations" value="0 GO annotations based on evolutionary models"/>
</dbReference>
<dbReference type="PhylomeDB" id="O60829"/>
<dbReference type="TreeFam" id="TF340669"/>
<dbReference type="PathwayCommons" id="O60829"/>
<dbReference type="SignaLink" id="O60829"/>
<dbReference type="SIGNOR" id="O60829"/>
<dbReference type="BioGRID-ORCS" id="9506">
    <property type="hits" value="13 hits in 778 CRISPR screens"/>
</dbReference>
<dbReference type="ChiTaRS" id="PAGE4">
    <property type="organism name" value="human"/>
</dbReference>
<dbReference type="GenomeRNAi" id="9506"/>
<dbReference type="Pharos" id="O60829">
    <property type="development level" value="Tbio"/>
</dbReference>
<dbReference type="PRO" id="PR:O60829"/>
<dbReference type="Proteomes" id="UP000005640">
    <property type="component" value="Chromosome X"/>
</dbReference>
<dbReference type="RNAct" id="O60829">
    <property type="molecule type" value="protein"/>
</dbReference>
<dbReference type="Bgee" id="ENSG00000101951">
    <property type="expression patterns" value="Expressed in corpus epididymis and 118 other cell types or tissues"/>
</dbReference>
<dbReference type="GO" id="GO:0005737">
    <property type="term" value="C:cytoplasm"/>
    <property type="evidence" value="ECO:0000314"/>
    <property type="project" value="UniProtKB"/>
</dbReference>
<dbReference type="GO" id="GO:0005739">
    <property type="term" value="C:mitochondrion"/>
    <property type="evidence" value="ECO:0000314"/>
    <property type="project" value="UniProtKB"/>
</dbReference>
<dbReference type="GO" id="GO:0005634">
    <property type="term" value="C:nucleus"/>
    <property type="evidence" value="ECO:0000314"/>
    <property type="project" value="UniProtKB"/>
</dbReference>
<dbReference type="GO" id="GO:0003677">
    <property type="term" value="F:DNA binding"/>
    <property type="evidence" value="ECO:0000314"/>
    <property type="project" value="UniProtKB"/>
</dbReference>
<dbReference type="GO" id="GO:0003676">
    <property type="term" value="F:nucleic acid binding"/>
    <property type="evidence" value="ECO:0000269"/>
    <property type="project" value="DisProt"/>
</dbReference>
<dbReference type="GO" id="GO:0003713">
    <property type="term" value="F:transcription coactivator activity"/>
    <property type="evidence" value="ECO:0000314"/>
    <property type="project" value="UniProtKB"/>
</dbReference>
<dbReference type="GO" id="GO:0035556">
    <property type="term" value="P:intracellular signal transduction"/>
    <property type="evidence" value="ECO:0000314"/>
    <property type="project" value="UniProtKB"/>
</dbReference>
<dbReference type="GO" id="GO:0043066">
    <property type="term" value="P:negative regulation of apoptotic process"/>
    <property type="evidence" value="ECO:0000314"/>
    <property type="project" value="UniProtKB"/>
</dbReference>
<dbReference type="GO" id="GO:1903427">
    <property type="term" value="P:negative regulation of reactive oxygen species biosynthetic process"/>
    <property type="evidence" value="ECO:0000314"/>
    <property type="project" value="UniProtKB"/>
</dbReference>
<dbReference type="GO" id="GO:0032872">
    <property type="term" value="P:regulation of stress-activated MAPK cascade"/>
    <property type="evidence" value="ECO:0000304"/>
    <property type="project" value="UniProtKB"/>
</dbReference>
<dbReference type="GO" id="GO:0042594">
    <property type="term" value="P:response to starvation"/>
    <property type="evidence" value="ECO:0000314"/>
    <property type="project" value="UniProtKB"/>
</dbReference>
<dbReference type="DisProt" id="DP01435"/>
<dbReference type="InterPro" id="IPR031320">
    <property type="entry name" value="GAGE"/>
</dbReference>
<dbReference type="InterPro" id="IPR008625">
    <property type="entry name" value="GAGE_fam"/>
</dbReference>
<dbReference type="PANTHER" id="PTHR14047:SF11">
    <property type="entry name" value="P ANTIGEN FAMILY MEMBER 4"/>
    <property type="match status" value="1"/>
</dbReference>
<dbReference type="PANTHER" id="PTHR14047">
    <property type="entry name" value="P ANTIGEN FAMILY MEMBER 5-RELATED"/>
    <property type="match status" value="1"/>
</dbReference>
<dbReference type="Pfam" id="PF05831">
    <property type="entry name" value="GAGE"/>
    <property type="match status" value="1"/>
</dbReference>
<dbReference type="SMART" id="SM01379">
    <property type="entry name" value="GAGE"/>
    <property type="match status" value="1"/>
</dbReference>